<keyword id="KW-1185">Reference proteome</keyword>
<keyword id="KW-0687">Ribonucleoprotein</keyword>
<keyword id="KW-0689">Ribosomal protein</keyword>
<keyword id="KW-0694">RNA-binding</keyword>
<keyword id="KW-0699">rRNA-binding</keyword>
<evidence type="ECO:0000255" key="1">
    <source>
        <dbReference type="HAMAP-Rule" id="MF_01345"/>
    </source>
</evidence>
<evidence type="ECO:0000305" key="2"/>
<gene>
    <name evidence="1" type="primary">rpsQ</name>
    <name type="ordered locus">Sfri_0157</name>
</gene>
<reference key="1">
    <citation type="submission" date="2006-08" db="EMBL/GenBank/DDBJ databases">
        <title>Complete sequence of Shewanella frigidimarina NCIMB 400.</title>
        <authorList>
            <consortium name="US DOE Joint Genome Institute"/>
            <person name="Copeland A."/>
            <person name="Lucas S."/>
            <person name="Lapidus A."/>
            <person name="Barry K."/>
            <person name="Detter J.C."/>
            <person name="Glavina del Rio T."/>
            <person name="Hammon N."/>
            <person name="Israni S."/>
            <person name="Dalin E."/>
            <person name="Tice H."/>
            <person name="Pitluck S."/>
            <person name="Fredrickson J.K."/>
            <person name="Kolker E."/>
            <person name="McCuel L.A."/>
            <person name="DiChristina T."/>
            <person name="Nealson K.H."/>
            <person name="Newman D."/>
            <person name="Tiedje J.M."/>
            <person name="Zhou J."/>
            <person name="Romine M.F."/>
            <person name="Culley D.E."/>
            <person name="Serres M."/>
            <person name="Chertkov O."/>
            <person name="Brettin T."/>
            <person name="Bruce D."/>
            <person name="Han C."/>
            <person name="Tapia R."/>
            <person name="Gilna P."/>
            <person name="Schmutz J."/>
            <person name="Larimer F."/>
            <person name="Land M."/>
            <person name="Hauser L."/>
            <person name="Kyrpides N."/>
            <person name="Mikhailova N."/>
            <person name="Richardson P."/>
        </authorList>
    </citation>
    <scope>NUCLEOTIDE SEQUENCE [LARGE SCALE GENOMIC DNA]</scope>
    <source>
        <strain>NCIMB 400</strain>
    </source>
</reference>
<feature type="chain" id="PRO_1000055019" description="Small ribosomal subunit protein uS17">
    <location>
        <begin position="1"/>
        <end position="82"/>
    </location>
</feature>
<proteinExistence type="inferred from homology"/>
<accession>Q089P5</accession>
<name>RS17_SHEFN</name>
<sequence>MSDKARTLQGKVISNKMDKSITVAIERQVKHPIYGKYIKRTTKIHAHDETNQCNEGDFVAISQCRPLSKTKSWTLAEVVTKA</sequence>
<organism>
    <name type="scientific">Shewanella frigidimarina (strain NCIMB 400)</name>
    <dbReference type="NCBI Taxonomy" id="318167"/>
    <lineage>
        <taxon>Bacteria</taxon>
        <taxon>Pseudomonadati</taxon>
        <taxon>Pseudomonadota</taxon>
        <taxon>Gammaproteobacteria</taxon>
        <taxon>Alteromonadales</taxon>
        <taxon>Shewanellaceae</taxon>
        <taxon>Shewanella</taxon>
    </lineage>
</organism>
<protein>
    <recommendedName>
        <fullName evidence="1">Small ribosomal subunit protein uS17</fullName>
    </recommendedName>
    <alternativeName>
        <fullName evidence="2">30S ribosomal protein S17</fullName>
    </alternativeName>
</protein>
<dbReference type="EMBL" id="CP000447">
    <property type="protein sequence ID" value="ABI70020.1"/>
    <property type="molecule type" value="Genomic_DNA"/>
</dbReference>
<dbReference type="RefSeq" id="WP_011635648.1">
    <property type="nucleotide sequence ID" value="NC_008345.1"/>
</dbReference>
<dbReference type="SMR" id="Q089P5"/>
<dbReference type="STRING" id="318167.Sfri_0157"/>
<dbReference type="KEGG" id="sfr:Sfri_0157"/>
<dbReference type="eggNOG" id="COG0186">
    <property type="taxonomic scope" value="Bacteria"/>
</dbReference>
<dbReference type="HOGENOM" id="CLU_073626_1_1_6"/>
<dbReference type="OrthoDB" id="9811714at2"/>
<dbReference type="Proteomes" id="UP000000684">
    <property type="component" value="Chromosome"/>
</dbReference>
<dbReference type="GO" id="GO:0022627">
    <property type="term" value="C:cytosolic small ribosomal subunit"/>
    <property type="evidence" value="ECO:0007669"/>
    <property type="project" value="TreeGrafter"/>
</dbReference>
<dbReference type="GO" id="GO:0019843">
    <property type="term" value="F:rRNA binding"/>
    <property type="evidence" value="ECO:0007669"/>
    <property type="project" value="UniProtKB-UniRule"/>
</dbReference>
<dbReference type="GO" id="GO:0003735">
    <property type="term" value="F:structural constituent of ribosome"/>
    <property type="evidence" value="ECO:0007669"/>
    <property type="project" value="InterPro"/>
</dbReference>
<dbReference type="GO" id="GO:0006412">
    <property type="term" value="P:translation"/>
    <property type="evidence" value="ECO:0007669"/>
    <property type="project" value="UniProtKB-UniRule"/>
</dbReference>
<dbReference type="CDD" id="cd00364">
    <property type="entry name" value="Ribosomal_uS17"/>
    <property type="match status" value="1"/>
</dbReference>
<dbReference type="FunFam" id="2.40.50.140:FF:000014">
    <property type="entry name" value="30S ribosomal protein S17"/>
    <property type="match status" value="1"/>
</dbReference>
<dbReference type="Gene3D" id="2.40.50.140">
    <property type="entry name" value="Nucleic acid-binding proteins"/>
    <property type="match status" value="1"/>
</dbReference>
<dbReference type="HAMAP" id="MF_01345_B">
    <property type="entry name" value="Ribosomal_uS17_B"/>
    <property type="match status" value="1"/>
</dbReference>
<dbReference type="InterPro" id="IPR012340">
    <property type="entry name" value="NA-bd_OB-fold"/>
</dbReference>
<dbReference type="InterPro" id="IPR000266">
    <property type="entry name" value="Ribosomal_uS17"/>
</dbReference>
<dbReference type="InterPro" id="IPR019984">
    <property type="entry name" value="Ribosomal_uS17_bact/chlr"/>
</dbReference>
<dbReference type="InterPro" id="IPR019979">
    <property type="entry name" value="Ribosomal_uS17_CS"/>
</dbReference>
<dbReference type="NCBIfam" id="NF004123">
    <property type="entry name" value="PRK05610.1"/>
    <property type="match status" value="1"/>
</dbReference>
<dbReference type="NCBIfam" id="TIGR03635">
    <property type="entry name" value="uS17_bact"/>
    <property type="match status" value="1"/>
</dbReference>
<dbReference type="PANTHER" id="PTHR10744">
    <property type="entry name" value="40S RIBOSOMAL PROTEIN S11 FAMILY MEMBER"/>
    <property type="match status" value="1"/>
</dbReference>
<dbReference type="PANTHER" id="PTHR10744:SF1">
    <property type="entry name" value="SMALL RIBOSOMAL SUBUNIT PROTEIN US17M"/>
    <property type="match status" value="1"/>
</dbReference>
<dbReference type="Pfam" id="PF00366">
    <property type="entry name" value="Ribosomal_S17"/>
    <property type="match status" value="1"/>
</dbReference>
<dbReference type="PRINTS" id="PR00973">
    <property type="entry name" value="RIBOSOMALS17"/>
</dbReference>
<dbReference type="SUPFAM" id="SSF50249">
    <property type="entry name" value="Nucleic acid-binding proteins"/>
    <property type="match status" value="1"/>
</dbReference>
<dbReference type="PROSITE" id="PS00056">
    <property type="entry name" value="RIBOSOMAL_S17"/>
    <property type="match status" value="1"/>
</dbReference>
<comment type="function">
    <text evidence="1">One of the primary rRNA binding proteins, it binds specifically to the 5'-end of 16S ribosomal RNA.</text>
</comment>
<comment type="subunit">
    <text evidence="1">Part of the 30S ribosomal subunit.</text>
</comment>
<comment type="similarity">
    <text evidence="1">Belongs to the universal ribosomal protein uS17 family.</text>
</comment>